<keyword id="KW-0903">Direct protein sequencing</keyword>
<keyword id="KW-1015">Disulfide bond</keyword>
<keyword id="KW-0964">Secreted</keyword>
<comment type="subcellular location">
    <subcellularLocation>
        <location>Secreted</location>
    </subcellularLocation>
</comment>
<comment type="tissue specificity">
    <text>Expressed by the venom gland.</text>
</comment>
<comment type="miscellaneous">
    <text evidence="2">Negative results: is not toxic to insects or mammals. Has no effect on smooth muscle contractility. Also lacks both agonist and antagonist activity at human prokineticin receptor 1 and 2 (PROKR1 and PROKR2). May not be involved in prey digestion.</text>
</comment>
<comment type="similarity">
    <text evidence="3">Belongs to the MIT-like AcTx family.</text>
</comment>
<proteinExistence type="evidence at protein level"/>
<reference key="1">
    <citation type="journal article" date="2000" name="Toxicon">
        <title>Isolation of a funnel-web spider polypeptide with homology to mamba intestinal toxin 1 and the embryonic head inducer Dickkopf-1.</title>
        <authorList>
            <person name="Szeto T.H."/>
            <person name="Wang X.-H."/>
            <person name="Smith R."/>
            <person name="Connor M."/>
            <person name="Christie M.J."/>
            <person name="Nicholson G.M."/>
            <person name="King G.F."/>
        </authorList>
    </citation>
    <scope>PROTEIN SEQUENCE</scope>
    <source>
        <tissue>Venom</tissue>
    </source>
</reference>
<reference key="2">
    <citation type="journal article" date="2005" name="Peptides">
        <title>Discovery of an MIT-like atracotoxin family: spider venom peptides that share sequence homology but not pharmacological properties with AVIT family proteins.</title>
        <authorList>
            <person name="Wen S."/>
            <person name="Wilson D.T."/>
            <person name="Kuruppu S."/>
            <person name="Korsinczky M.L."/>
            <person name="Hedrick J."/>
            <person name="Pang L."/>
            <person name="Szeto T."/>
            <person name="Hodgson W.C."/>
            <person name="Alewood P.F."/>
            <person name="Nicholson G.M."/>
        </authorList>
    </citation>
    <scope>FUNCTION</scope>
</reference>
<accession>P81803</accession>
<dbReference type="SMR" id="P81803"/>
<dbReference type="ArachnoServer" id="AS000209">
    <property type="toxin name" value="U1-hexatoxin-Hv1a"/>
</dbReference>
<dbReference type="GO" id="GO:0005576">
    <property type="term" value="C:extracellular region"/>
    <property type="evidence" value="ECO:0007669"/>
    <property type="project" value="UniProtKB-SubCell"/>
</dbReference>
<dbReference type="Gene3D" id="2.10.80.10">
    <property type="entry name" value="Lipase, subunit A"/>
    <property type="match status" value="1"/>
</dbReference>
<dbReference type="InterPro" id="IPR020202">
    <property type="entry name" value="Atracotoxin"/>
</dbReference>
<dbReference type="Pfam" id="PF17556">
    <property type="entry name" value="MIT_LIKE_ACTX"/>
    <property type="match status" value="1"/>
</dbReference>
<evidence type="ECO:0000269" key="1">
    <source>
    </source>
</evidence>
<evidence type="ECO:0000269" key="2">
    <source>
    </source>
</evidence>
<evidence type="ECO:0000305" key="3"/>
<evidence type="ECO:0000305" key="4">
    <source>
    </source>
</evidence>
<name>TTF17_HADVE</name>
<feature type="chain" id="PRO_0000087670" description="U1-hexatoxin-Hv1a" evidence="1">
    <location>
        <begin position="1"/>
        <end position="68"/>
    </location>
</feature>
<feature type="disulfide bond" evidence="4">
    <location>
        <begin position="3"/>
        <end position="14"/>
    </location>
</feature>
<feature type="disulfide bond" evidence="4">
    <location>
        <begin position="8"/>
        <end position="22"/>
    </location>
</feature>
<feature type="disulfide bond" evidence="4">
    <location>
        <begin position="13"/>
        <end position="48"/>
    </location>
</feature>
<feature type="disulfide bond" evidence="4">
    <location>
        <begin position="32"/>
        <end position="56"/>
    </location>
</feature>
<feature type="disulfide bond" evidence="4">
    <location>
        <begin position="50"/>
        <end position="63"/>
    </location>
</feature>
<organism>
    <name type="scientific">Hadronyche versuta</name>
    <name type="common">Blue mountains funnel-web spider</name>
    <name type="synonym">Atrax versutus</name>
    <dbReference type="NCBI Taxonomy" id="6904"/>
    <lineage>
        <taxon>Eukaryota</taxon>
        <taxon>Metazoa</taxon>
        <taxon>Ecdysozoa</taxon>
        <taxon>Arthropoda</taxon>
        <taxon>Chelicerata</taxon>
        <taxon>Arachnida</taxon>
        <taxon>Araneae</taxon>
        <taxon>Mygalomorphae</taxon>
        <taxon>Hexathelidae</taxon>
        <taxon>Hadronyche</taxon>
    </lineage>
</organism>
<sequence>EQCGDDVCGAGHCCSEYPPMHCKRVGQLYDLCMASKATKNSGNHLFFCPCDEGMYCDMNSWSCQKRTA</sequence>
<protein>
    <recommendedName>
        <fullName>U1-hexatoxin-Hv1a</fullName>
        <shortName>U1-HXTX-Hv1a</shortName>
    </recommendedName>
    <alternativeName>
        <fullName>Atracotoxin-Hvf17</fullName>
        <shortName>AcTx-Hvf17</shortName>
    </alternativeName>
</protein>